<proteinExistence type="inferred from homology"/>
<keyword id="KW-0028">Amino-acid biosynthesis</keyword>
<keyword id="KW-0170">Cobalt</keyword>
<keyword id="KW-0220">Diaminopimelate biosynthesis</keyword>
<keyword id="KW-0378">Hydrolase</keyword>
<keyword id="KW-0457">Lysine biosynthesis</keyword>
<keyword id="KW-0479">Metal-binding</keyword>
<keyword id="KW-1185">Reference proteome</keyword>
<keyword id="KW-0862">Zinc</keyword>
<evidence type="ECO:0000255" key="1">
    <source>
        <dbReference type="HAMAP-Rule" id="MF_01690"/>
    </source>
</evidence>
<feature type="chain" id="PRO_0000375768" description="Succinyl-diaminopimelate desuccinylase">
    <location>
        <begin position="1"/>
        <end position="377"/>
    </location>
</feature>
<feature type="active site" evidence="1">
    <location>
        <position position="70"/>
    </location>
</feature>
<feature type="active site" description="Proton acceptor" evidence="1">
    <location>
        <position position="135"/>
    </location>
</feature>
<feature type="binding site" evidence="1">
    <location>
        <position position="68"/>
    </location>
    <ligand>
        <name>Zn(2+)</name>
        <dbReference type="ChEBI" id="CHEBI:29105"/>
        <label>1</label>
    </ligand>
</feature>
<feature type="binding site" evidence="1">
    <location>
        <position position="101"/>
    </location>
    <ligand>
        <name>Zn(2+)</name>
        <dbReference type="ChEBI" id="CHEBI:29105"/>
        <label>1</label>
    </ligand>
</feature>
<feature type="binding site" evidence="1">
    <location>
        <position position="101"/>
    </location>
    <ligand>
        <name>Zn(2+)</name>
        <dbReference type="ChEBI" id="CHEBI:29105"/>
        <label>2</label>
    </ligand>
</feature>
<feature type="binding site" evidence="1">
    <location>
        <position position="136"/>
    </location>
    <ligand>
        <name>Zn(2+)</name>
        <dbReference type="ChEBI" id="CHEBI:29105"/>
        <label>2</label>
    </ligand>
</feature>
<feature type="binding site" evidence="1">
    <location>
        <position position="164"/>
    </location>
    <ligand>
        <name>Zn(2+)</name>
        <dbReference type="ChEBI" id="CHEBI:29105"/>
        <label>1</label>
    </ligand>
</feature>
<feature type="binding site" evidence="1">
    <location>
        <position position="350"/>
    </location>
    <ligand>
        <name>Zn(2+)</name>
        <dbReference type="ChEBI" id="CHEBI:29105"/>
        <label>2</label>
    </ligand>
</feature>
<accession>Q5E3I7</accession>
<comment type="function">
    <text evidence="1">Catalyzes the hydrolysis of N-succinyl-L,L-diaminopimelic acid (SDAP), forming succinate and LL-2,6-diaminopimelate (DAP), an intermediate involved in the bacterial biosynthesis of lysine and meso-diaminopimelic acid, an essential component of bacterial cell walls.</text>
</comment>
<comment type="catalytic activity">
    <reaction evidence="1">
        <text>N-succinyl-(2S,6S)-2,6-diaminopimelate + H2O = (2S,6S)-2,6-diaminopimelate + succinate</text>
        <dbReference type="Rhea" id="RHEA:22608"/>
        <dbReference type="ChEBI" id="CHEBI:15377"/>
        <dbReference type="ChEBI" id="CHEBI:30031"/>
        <dbReference type="ChEBI" id="CHEBI:57609"/>
        <dbReference type="ChEBI" id="CHEBI:58087"/>
        <dbReference type="EC" id="3.5.1.18"/>
    </reaction>
</comment>
<comment type="cofactor">
    <cofactor evidence="1">
        <name>Zn(2+)</name>
        <dbReference type="ChEBI" id="CHEBI:29105"/>
    </cofactor>
    <cofactor evidence="1">
        <name>Co(2+)</name>
        <dbReference type="ChEBI" id="CHEBI:48828"/>
    </cofactor>
    <text evidence="1">Binds 2 Zn(2+) or Co(2+) ions per subunit.</text>
</comment>
<comment type="pathway">
    <text evidence="1">Amino-acid biosynthesis; L-lysine biosynthesis via DAP pathway; LL-2,6-diaminopimelate from (S)-tetrahydrodipicolinate (succinylase route): step 3/3.</text>
</comment>
<comment type="subunit">
    <text evidence="1">Homodimer.</text>
</comment>
<comment type="similarity">
    <text evidence="1">Belongs to the peptidase M20A family. DapE subfamily.</text>
</comment>
<sequence>MSDTPTLALAKDLLSRQSITPEDAGCQELMIKQLEALGFTIEIMVFEDTTNFWARRGNKAPLFTFAGHTDVVPTGDLTHWNTNPFEPTIIDGMLYARGAADMKGSLACMVVAVERFVAEHPNHKGSISFLITSDEEGPFINGTTRVVDTLQERNEIIDMCIVGEPSSTAHVGDVVKNGRRGSLTGNLTVKGIQGHVAYPHIARNPIHQAMPALSELATTVWDNGNDYFPPTSFQIPNMNGGTGASNVIPGTVDIMFNFRFSTESTVDELQQRVVEILDKHDLEYELDWIINGLPFLTDTGDLLTAVVNAVDTVNQQKPQLLTTGGTSDGRFIAQMGSQVIELGPVNATIHKVNECVNVEDLEKLTDMYQEVLNNLLA</sequence>
<dbReference type="EC" id="3.5.1.18" evidence="1"/>
<dbReference type="EMBL" id="CP000020">
    <property type="protein sequence ID" value="AAW86409.1"/>
    <property type="molecule type" value="Genomic_DNA"/>
</dbReference>
<dbReference type="RefSeq" id="WP_011262397.1">
    <property type="nucleotide sequence ID" value="NC_006840.2"/>
</dbReference>
<dbReference type="RefSeq" id="YP_205297.1">
    <property type="nucleotide sequence ID" value="NC_006840.2"/>
</dbReference>
<dbReference type="SMR" id="Q5E3I7"/>
<dbReference type="STRING" id="312309.VF_1914"/>
<dbReference type="EnsemblBacteria" id="AAW86409">
    <property type="protein sequence ID" value="AAW86409"/>
    <property type="gene ID" value="VF_1914"/>
</dbReference>
<dbReference type="GeneID" id="54164611"/>
<dbReference type="KEGG" id="vfi:VF_1914"/>
<dbReference type="PATRIC" id="fig|312309.11.peg.1941"/>
<dbReference type="eggNOG" id="COG0624">
    <property type="taxonomic scope" value="Bacteria"/>
</dbReference>
<dbReference type="HOGENOM" id="CLU_021802_4_0_6"/>
<dbReference type="OrthoDB" id="9809784at2"/>
<dbReference type="UniPathway" id="UPA00034">
    <property type="reaction ID" value="UER00021"/>
</dbReference>
<dbReference type="Proteomes" id="UP000000537">
    <property type="component" value="Chromosome I"/>
</dbReference>
<dbReference type="GO" id="GO:0008777">
    <property type="term" value="F:acetylornithine deacetylase activity"/>
    <property type="evidence" value="ECO:0007669"/>
    <property type="project" value="TreeGrafter"/>
</dbReference>
<dbReference type="GO" id="GO:0050897">
    <property type="term" value="F:cobalt ion binding"/>
    <property type="evidence" value="ECO:0007669"/>
    <property type="project" value="UniProtKB-UniRule"/>
</dbReference>
<dbReference type="GO" id="GO:0009014">
    <property type="term" value="F:succinyl-diaminopimelate desuccinylase activity"/>
    <property type="evidence" value="ECO:0007669"/>
    <property type="project" value="UniProtKB-UniRule"/>
</dbReference>
<dbReference type="GO" id="GO:0008270">
    <property type="term" value="F:zinc ion binding"/>
    <property type="evidence" value="ECO:0007669"/>
    <property type="project" value="UniProtKB-UniRule"/>
</dbReference>
<dbReference type="GO" id="GO:0019877">
    <property type="term" value="P:diaminopimelate biosynthetic process"/>
    <property type="evidence" value="ECO:0007669"/>
    <property type="project" value="UniProtKB-UniRule"/>
</dbReference>
<dbReference type="GO" id="GO:0006526">
    <property type="term" value="P:L-arginine biosynthetic process"/>
    <property type="evidence" value="ECO:0007669"/>
    <property type="project" value="TreeGrafter"/>
</dbReference>
<dbReference type="GO" id="GO:0009089">
    <property type="term" value="P:lysine biosynthetic process via diaminopimelate"/>
    <property type="evidence" value="ECO:0007669"/>
    <property type="project" value="UniProtKB-UniRule"/>
</dbReference>
<dbReference type="CDD" id="cd03891">
    <property type="entry name" value="M20_DapE_proteobac"/>
    <property type="match status" value="1"/>
</dbReference>
<dbReference type="FunFam" id="3.40.630.10:FF:000005">
    <property type="entry name" value="Succinyl-diaminopimelate desuccinylase"/>
    <property type="match status" value="1"/>
</dbReference>
<dbReference type="FunFam" id="3.40.630.10:FF:000010">
    <property type="entry name" value="Succinyl-diaminopimelate desuccinylase"/>
    <property type="match status" value="1"/>
</dbReference>
<dbReference type="Gene3D" id="3.40.630.10">
    <property type="entry name" value="Zn peptidases"/>
    <property type="match status" value="2"/>
</dbReference>
<dbReference type="HAMAP" id="MF_01690">
    <property type="entry name" value="DapE"/>
    <property type="match status" value="1"/>
</dbReference>
<dbReference type="InterPro" id="IPR001261">
    <property type="entry name" value="ArgE/DapE_CS"/>
</dbReference>
<dbReference type="InterPro" id="IPR036264">
    <property type="entry name" value="Bact_exopeptidase_dim_dom"/>
</dbReference>
<dbReference type="InterPro" id="IPR005941">
    <property type="entry name" value="DapE_proteobac"/>
</dbReference>
<dbReference type="InterPro" id="IPR002933">
    <property type="entry name" value="Peptidase_M20"/>
</dbReference>
<dbReference type="InterPro" id="IPR011650">
    <property type="entry name" value="Peptidase_M20_dimer"/>
</dbReference>
<dbReference type="InterPro" id="IPR050072">
    <property type="entry name" value="Peptidase_M20A"/>
</dbReference>
<dbReference type="NCBIfam" id="TIGR01246">
    <property type="entry name" value="dapE_proteo"/>
    <property type="match status" value="1"/>
</dbReference>
<dbReference type="NCBIfam" id="NF009557">
    <property type="entry name" value="PRK13009.1"/>
    <property type="match status" value="1"/>
</dbReference>
<dbReference type="PANTHER" id="PTHR43808">
    <property type="entry name" value="ACETYLORNITHINE DEACETYLASE"/>
    <property type="match status" value="1"/>
</dbReference>
<dbReference type="PANTHER" id="PTHR43808:SF31">
    <property type="entry name" value="N-ACETYL-L-CITRULLINE DEACETYLASE"/>
    <property type="match status" value="1"/>
</dbReference>
<dbReference type="Pfam" id="PF07687">
    <property type="entry name" value="M20_dimer"/>
    <property type="match status" value="1"/>
</dbReference>
<dbReference type="Pfam" id="PF01546">
    <property type="entry name" value="Peptidase_M20"/>
    <property type="match status" value="1"/>
</dbReference>
<dbReference type="SUPFAM" id="SSF55031">
    <property type="entry name" value="Bacterial exopeptidase dimerisation domain"/>
    <property type="match status" value="1"/>
</dbReference>
<dbReference type="SUPFAM" id="SSF53187">
    <property type="entry name" value="Zn-dependent exopeptidases"/>
    <property type="match status" value="1"/>
</dbReference>
<dbReference type="PROSITE" id="PS00759">
    <property type="entry name" value="ARGE_DAPE_CPG2_2"/>
    <property type="match status" value="1"/>
</dbReference>
<organism>
    <name type="scientific">Aliivibrio fischeri (strain ATCC 700601 / ES114)</name>
    <name type="common">Vibrio fischeri</name>
    <dbReference type="NCBI Taxonomy" id="312309"/>
    <lineage>
        <taxon>Bacteria</taxon>
        <taxon>Pseudomonadati</taxon>
        <taxon>Pseudomonadota</taxon>
        <taxon>Gammaproteobacteria</taxon>
        <taxon>Vibrionales</taxon>
        <taxon>Vibrionaceae</taxon>
        <taxon>Aliivibrio</taxon>
    </lineage>
</organism>
<reference key="1">
    <citation type="journal article" date="2005" name="Proc. Natl. Acad. Sci. U.S.A.">
        <title>Complete genome sequence of Vibrio fischeri: a symbiotic bacterium with pathogenic congeners.</title>
        <authorList>
            <person name="Ruby E.G."/>
            <person name="Urbanowski M."/>
            <person name="Campbell J."/>
            <person name="Dunn A."/>
            <person name="Faini M."/>
            <person name="Gunsalus R."/>
            <person name="Lostroh P."/>
            <person name="Lupp C."/>
            <person name="McCann J."/>
            <person name="Millikan D."/>
            <person name="Schaefer A."/>
            <person name="Stabb E."/>
            <person name="Stevens A."/>
            <person name="Visick K."/>
            <person name="Whistler C."/>
            <person name="Greenberg E.P."/>
        </authorList>
    </citation>
    <scope>NUCLEOTIDE SEQUENCE [LARGE SCALE GENOMIC DNA]</scope>
    <source>
        <strain>ATCC 700601 / ES114</strain>
    </source>
</reference>
<protein>
    <recommendedName>
        <fullName evidence="1">Succinyl-diaminopimelate desuccinylase</fullName>
        <shortName evidence="1">SDAP desuccinylase</shortName>
        <ecNumber evidence="1">3.5.1.18</ecNumber>
    </recommendedName>
    <alternativeName>
        <fullName evidence="1">N-succinyl-LL-2,6-diaminoheptanedioate amidohydrolase</fullName>
    </alternativeName>
</protein>
<name>DAPE_ALIF1</name>
<gene>
    <name evidence="1" type="primary">dapE</name>
    <name type="ordered locus">VF_1914</name>
</gene>